<protein>
    <recommendedName>
        <fullName evidence="1">Photosystem II reaction center protein M</fullName>
        <shortName evidence="1">PSII-M</shortName>
    </recommendedName>
</protein>
<sequence length="35" mass="3809">MEVNILAFVATALFILIPTAFLLILYIQTAAQNNG</sequence>
<proteinExistence type="evidence at transcript level"/>
<gene>
    <name evidence="1" type="primary">psbM</name>
</gene>
<reference key="1">
    <citation type="journal article" date="2003" name="DNA Res.">
        <title>Complete nucleotide sequence of the chloroplast genome from a leptosporangiate fern, Adiantum capillus-veneris L.</title>
        <authorList>
            <person name="Wolf P.G."/>
            <person name="Rowe C.A."/>
            <person name="Sinclair R.B."/>
            <person name="Hasebe M."/>
        </authorList>
    </citation>
    <scope>NUCLEOTIDE SEQUENCE [LARGE SCALE GENOMIC DNA]</scope>
</reference>
<reference key="2">
    <citation type="journal article" date="2004" name="Gene">
        <title>High levels of RNA editing in a vascular plant chloroplast genome: analysis of transcripts from the fern Adiantum capillus-veneris.</title>
        <authorList>
            <person name="Wolf P.G."/>
            <person name="Rowe C.A."/>
            <person name="Hasebe M."/>
        </authorList>
    </citation>
    <scope>NUCLEOTIDE SEQUENCE [GENOMIC DNA]</scope>
    <scope>RNA EDITING</scope>
    <source>
        <tissue>Frond</tissue>
    </source>
</reference>
<name>PSBM_ADICA</name>
<evidence type="ECO:0000255" key="1">
    <source>
        <dbReference type="HAMAP-Rule" id="MF_00438"/>
    </source>
</evidence>
<evidence type="ECO:0000269" key="2">
    <source>
    </source>
</evidence>
<geneLocation type="chloroplast"/>
<keyword id="KW-0150">Chloroplast</keyword>
<keyword id="KW-0472">Membrane</keyword>
<keyword id="KW-0602">Photosynthesis</keyword>
<keyword id="KW-0604">Photosystem II</keyword>
<keyword id="KW-0934">Plastid</keyword>
<keyword id="KW-0674">Reaction center</keyword>
<keyword id="KW-0691">RNA editing</keyword>
<keyword id="KW-0793">Thylakoid</keyword>
<keyword id="KW-0812">Transmembrane</keyword>
<keyword id="KW-1133">Transmembrane helix</keyword>
<comment type="function">
    <text evidence="1">One of the components of the core complex of photosystem II (PSII). PSII is a light-driven water:plastoquinone oxidoreductase that uses light energy to abstract electrons from H(2)O, generating O(2) and a proton gradient subsequently used for ATP formation. It consists of a core antenna complex that captures photons, and an electron transfer chain that converts photonic excitation into a charge separation. This subunit is found at the monomer-monomer interface.</text>
</comment>
<comment type="subunit">
    <text evidence="1">PSII is composed of 1 copy each of membrane proteins PsbA, PsbB, PsbC, PsbD, PsbE, PsbF, PsbH, PsbI, PsbJ, PsbK, PsbL, PsbM, PsbT, PsbX, PsbY, PsbZ, Psb30/Ycf12, at least 3 peripheral proteins of the oxygen-evolving complex and a large number of cofactors. It forms dimeric complexes.</text>
</comment>
<comment type="subcellular location">
    <subcellularLocation>
        <location evidence="1">Plastid</location>
        <location evidence="1">Chloroplast thylakoid membrane</location>
        <topology evidence="1">Single-pass membrane protein</topology>
    </subcellularLocation>
</comment>
<comment type="RNA editing">
    <location>
        <position position="1" evidence="2"/>
    </location>
    <text>The initiator methionine is created by RNA editing.</text>
</comment>
<comment type="similarity">
    <text evidence="1">Belongs to the PsbM family.</text>
</comment>
<accession>Q85FM6</accession>
<feature type="chain" id="PRO_0000217545" description="Photosystem II reaction center protein M">
    <location>
        <begin position="1"/>
        <end position="35"/>
    </location>
</feature>
<feature type="transmembrane region" description="Helical" evidence="1">
    <location>
        <begin position="5"/>
        <end position="25"/>
    </location>
</feature>
<organism>
    <name type="scientific">Adiantum capillus-veneris</name>
    <name type="common">Maidenhair fern</name>
    <dbReference type="NCBI Taxonomy" id="13818"/>
    <lineage>
        <taxon>Eukaryota</taxon>
        <taxon>Viridiplantae</taxon>
        <taxon>Streptophyta</taxon>
        <taxon>Embryophyta</taxon>
        <taxon>Tracheophyta</taxon>
        <taxon>Polypodiopsida</taxon>
        <taxon>Polypodiidae</taxon>
        <taxon>Polypodiales</taxon>
        <taxon>Pteridineae</taxon>
        <taxon>Pteridaceae</taxon>
        <taxon>Vittarioideae</taxon>
        <taxon>Adiantum</taxon>
    </lineage>
</organism>
<dbReference type="EMBL" id="AY178864">
    <property type="protein sequence ID" value="AAP29385.2"/>
    <property type="molecule type" value="Genomic_DNA"/>
</dbReference>
<dbReference type="RefSeq" id="NP_848053.2">
    <property type="nucleotide sequence ID" value="NC_004766.1"/>
</dbReference>
<dbReference type="SMR" id="Q85FM6"/>
<dbReference type="GeneID" id="807364"/>
<dbReference type="GO" id="GO:0009535">
    <property type="term" value="C:chloroplast thylakoid membrane"/>
    <property type="evidence" value="ECO:0007669"/>
    <property type="project" value="UniProtKB-SubCell"/>
</dbReference>
<dbReference type="GO" id="GO:0009523">
    <property type="term" value="C:photosystem II"/>
    <property type="evidence" value="ECO:0007669"/>
    <property type="project" value="UniProtKB-KW"/>
</dbReference>
<dbReference type="GO" id="GO:0019684">
    <property type="term" value="P:photosynthesis, light reaction"/>
    <property type="evidence" value="ECO:0007669"/>
    <property type="project" value="InterPro"/>
</dbReference>
<dbReference type="HAMAP" id="MF_00438">
    <property type="entry name" value="PSII_PsbM"/>
    <property type="match status" value="1"/>
</dbReference>
<dbReference type="InterPro" id="IPR007826">
    <property type="entry name" value="PSII_PsbM"/>
</dbReference>
<dbReference type="InterPro" id="IPR037269">
    <property type="entry name" value="PSII_PsbM_sf"/>
</dbReference>
<dbReference type="NCBIfam" id="TIGR03038">
    <property type="entry name" value="PS_II_psbM"/>
    <property type="match status" value="1"/>
</dbReference>
<dbReference type="PANTHER" id="PTHR35774">
    <property type="entry name" value="PHOTOSYSTEM II REACTION CENTER PROTEIN M"/>
    <property type="match status" value="1"/>
</dbReference>
<dbReference type="PANTHER" id="PTHR35774:SF1">
    <property type="entry name" value="PHOTOSYSTEM II REACTION CENTER PROTEIN M"/>
    <property type="match status" value="1"/>
</dbReference>
<dbReference type="Pfam" id="PF05151">
    <property type="entry name" value="PsbM"/>
    <property type="match status" value="1"/>
</dbReference>
<dbReference type="SUPFAM" id="SSF161033">
    <property type="entry name" value="Photosystem II reaction center protein M, PsbM"/>
    <property type="match status" value="1"/>
</dbReference>